<gene>
    <name evidence="15" type="primary">NDE1</name>
    <name type="synonym">NUDE</name>
</gene>
<reference key="1">
    <citation type="journal article" date="2004" name="Nat. Genet.">
        <title>Complete sequencing and characterization of 21,243 full-length human cDNAs.</title>
        <authorList>
            <person name="Ota T."/>
            <person name="Suzuki Y."/>
            <person name="Nishikawa T."/>
            <person name="Otsuki T."/>
            <person name="Sugiyama T."/>
            <person name="Irie R."/>
            <person name="Wakamatsu A."/>
            <person name="Hayashi K."/>
            <person name="Sato H."/>
            <person name="Nagai K."/>
            <person name="Kimura K."/>
            <person name="Makita H."/>
            <person name="Sekine M."/>
            <person name="Obayashi M."/>
            <person name="Nishi T."/>
            <person name="Shibahara T."/>
            <person name="Tanaka T."/>
            <person name="Ishii S."/>
            <person name="Yamamoto J."/>
            <person name="Saito K."/>
            <person name="Kawai Y."/>
            <person name="Isono Y."/>
            <person name="Nakamura Y."/>
            <person name="Nagahari K."/>
            <person name="Murakami K."/>
            <person name="Yasuda T."/>
            <person name="Iwayanagi T."/>
            <person name="Wagatsuma M."/>
            <person name="Shiratori A."/>
            <person name="Sudo H."/>
            <person name="Hosoiri T."/>
            <person name="Kaku Y."/>
            <person name="Kodaira H."/>
            <person name="Kondo H."/>
            <person name="Sugawara M."/>
            <person name="Takahashi M."/>
            <person name="Kanda K."/>
            <person name="Yokoi T."/>
            <person name="Furuya T."/>
            <person name="Kikkawa E."/>
            <person name="Omura Y."/>
            <person name="Abe K."/>
            <person name="Kamihara K."/>
            <person name="Katsuta N."/>
            <person name="Sato K."/>
            <person name="Tanikawa M."/>
            <person name="Yamazaki M."/>
            <person name="Ninomiya K."/>
            <person name="Ishibashi T."/>
            <person name="Yamashita H."/>
            <person name="Murakawa K."/>
            <person name="Fujimori K."/>
            <person name="Tanai H."/>
            <person name="Kimata M."/>
            <person name="Watanabe M."/>
            <person name="Hiraoka S."/>
            <person name="Chiba Y."/>
            <person name="Ishida S."/>
            <person name="Ono Y."/>
            <person name="Takiguchi S."/>
            <person name="Watanabe S."/>
            <person name="Yosida M."/>
            <person name="Hotuta T."/>
            <person name="Kusano J."/>
            <person name="Kanehori K."/>
            <person name="Takahashi-Fujii A."/>
            <person name="Hara H."/>
            <person name="Tanase T.-O."/>
            <person name="Nomura Y."/>
            <person name="Togiya S."/>
            <person name="Komai F."/>
            <person name="Hara R."/>
            <person name="Takeuchi K."/>
            <person name="Arita M."/>
            <person name="Imose N."/>
            <person name="Musashino K."/>
            <person name="Yuuki H."/>
            <person name="Oshima A."/>
            <person name="Sasaki N."/>
            <person name="Aotsuka S."/>
            <person name="Yoshikawa Y."/>
            <person name="Matsunawa H."/>
            <person name="Ichihara T."/>
            <person name="Shiohata N."/>
            <person name="Sano S."/>
            <person name="Moriya S."/>
            <person name="Momiyama H."/>
            <person name="Satoh N."/>
            <person name="Takami S."/>
            <person name="Terashima Y."/>
            <person name="Suzuki O."/>
            <person name="Nakagawa S."/>
            <person name="Senoh A."/>
            <person name="Mizoguchi H."/>
            <person name="Goto Y."/>
            <person name="Shimizu F."/>
            <person name="Wakebe H."/>
            <person name="Hishigaki H."/>
            <person name="Watanabe T."/>
            <person name="Sugiyama A."/>
            <person name="Takemoto M."/>
            <person name="Kawakami B."/>
            <person name="Yamazaki M."/>
            <person name="Watanabe K."/>
            <person name="Kumagai A."/>
            <person name="Itakura S."/>
            <person name="Fukuzumi Y."/>
            <person name="Fujimori Y."/>
            <person name="Komiyama M."/>
            <person name="Tashiro H."/>
            <person name="Tanigami A."/>
            <person name="Fujiwara T."/>
            <person name="Ono T."/>
            <person name="Yamada K."/>
            <person name="Fujii Y."/>
            <person name="Ozaki K."/>
            <person name="Hirao M."/>
            <person name="Ohmori Y."/>
            <person name="Kawabata A."/>
            <person name="Hikiji T."/>
            <person name="Kobatake N."/>
            <person name="Inagaki H."/>
            <person name="Ikema Y."/>
            <person name="Okamoto S."/>
            <person name="Okitani R."/>
            <person name="Kawakami T."/>
            <person name="Noguchi S."/>
            <person name="Itoh T."/>
            <person name="Shigeta K."/>
            <person name="Senba T."/>
            <person name="Matsumura K."/>
            <person name="Nakajima Y."/>
            <person name="Mizuno T."/>
            <person name="Morinaga M."/>
            <person name="Sasaki M."/>
            <person name="Togashi T."/>
            <person name="Oyama M."/>
            <person name="Hata H."/>
            <person name="Watanabe M."/>
            <person name="Komatsu T."/>
            <person name="Mizushima-Sugano J."/>
            <person name="Satoh T."/>
            <person name="Shirai Y."/>
            <person name="Takahashi Y."/>
            <person name="Nakagawa K."/>
            <person name="Okumura K."/>
            <person name="Nagase T."/>
            <person name="Nomura N."/>
            <person name="Kikuchi H."/>
            <person name="Masuho Y."/>
            <person name="Yamashita R."/>
            <person name="Nakai K."/>
            <person name="Yada T."/>
            <person name="Nakamura Y."/>
            <person name="Ohara O."/>
            <person name="Isogai T."/>
            <person name="Sugano S."/>
        </authorList>
    </citation>
    <scope>NUCLEOTIDE SEQUENCE [LARGE SCALE MRNA] (ISOFORM 1)</scope>
    <source>
        <tissue>Colon</tissue>
    </source>
</reference>
<reference key="2">
    <citation type="journal article" date="2004" name="Nature">
        <title>The sequence and analysis of duplication-rich human chromosome 16.</title>
        <authorList>
            <person name="Martin J."/>
            <person name="Han C."/>
            <person name="Gordon L.A."/>
            <person name="Terry A."/>
            <person name="Prabhakar S."/>
            <person name="She X."/>
            <person name="Xie G."/>
            <person name="Hellsten U."/>
            <person name="Chan Y.M."/>
            <person name="Altherr M."/>
            <person name="Couronne O."/>
            <person name="Aerts A."/>
            <person name="Bajorek E."/>
            <person name="Black S."/>
            <person name="Blumer H."/>
            <person name="Branscomb E."/>
            <person name="Brown N.C."/>
            <person name="Bruno W.J."/>
            <person name="Buckingham J.M."/>
            <person name="Callen D.F."/>
            <person name="Campbell C.S."/>
            <person name="Campbell M.L."/>
            <person name="Campbell E.W."/>
            <person name="Caoile C."/>
            <person name="Challacombe J.F."/>
            <person name="Chasteen L.A."/>
            <person name="Chertkov O."/>
            <person name="Chi H.C."/>
            <person name="Christensen M."/>
            <person name="Clark L.M."/>
            <person name="Cohn J.D."/>
            <person name="Denys M."/>
            <person name="Detter J.C."/>
            <person name="Dickson M."/>
            <person name="Dimitrijevic-Bussod M."/>
            <person name="Escobar J."/>
            <person name="Fawcett J.J."/>
            <person name="Flowers D."/>
            <person name="Fotopulos D."/>
            <person name="Glavina T."/>
            <person name="Gomez M."/>
            <person name="Gonzales E."/>
            <person name="Goodstein D."/>
            <person name="Goodwin L.A."/>
            <person name="Grady D.L."/>
            <person name="Grigoriev I."/>
            <person name="Groza M."/>
            <person name="Hammon N."/>
            <person name="Hawkins T."/>
            <person name="Haydu L."/>
            <person name="Hildebrand C.E."/>
            <person name="Huang W."/>
            <person name="Israni S."/>
            <person name="Jett J."/>
            <person name="Jewett P.B."/>
            <person name="Kadner K."/>
            <person name="Kimball H."/>
            <person name="Kobayashi A."/>
            <person name="Krawczyk M.-C."/>
            <person name="Leyba T."/>
            <person name="Longmire J.L."/>
            <person name="Lopez F."/>
            <person name="Lou Y."/>
            <person name="Lowry S."/>
            <person name="Ludeman T."/>
            <person name="Manohar C.F."/>
            <person name="Mark G.A."/>
            <person name="McMurray K.L."/>
            <person name="Meincke L.J."/>
            <person name="Morgan J."/>
            <person name="Moyzis R.K."/>
            <person name="Mundt M.O."/>
            <person name="Munk A.C."/>
            <person name="Nandkeshwar R.D."/>
            <person name="Pitluck S."/>
            <person name="Pollard M."/>
            <person name="Predki P."/>
            <person name="Parson-Quintana B."/>
            <person name="Ramirez L."/>
            <person name="Rash S."/>
            <person name="Retterer J."/>
            <person name="Ricke D.O."/>
            <person name="Robinson D.L."/>
            <person name="Rodriguez A."/>
            <person name="Salamov A."/>
            <person name="Saunders E.H."/>
            <person name="Scott D."/>
            <person name="Shough T."/>
            <person name="Stallings R.L."/>
            <person name="Stalvey M."/>
            <person name="Sutherland R.D."/>
            <person name="Tapia R."/>
            <person name="Tesmer J.G."/>
            <person name="Thayer N."/>
            <person name="Thompson L.S."/>
            <person name="Tice H."/>
            <person name="Torney D.C."/>
            <person name="Tran-Gyamfi M."/>
            <person name="Tsai M."/>
            <person name="Ulanovsky L.E."/>
            <person name="Ustaszewska A."/>
            <person name="Vo N."/>
            <person name="White P.S."/>
            <person name="Williams A.L."/>
            <person name="Wills P.L."/>
            <person name="Wu J.-R."/>
            <person name="Wu K."/>
            <person name="Yang J."/>
            <person name="DeJong P."/>
            <person name="Bruce D."/>
            <person name="Doggett N.A."/>
            <person name="Deaven L."/>
            <person name="Schmutz J."/>
            <person name="Grimwood J."/>
            <person name="Richardson P."/>
            <person name="Rokhsar D.S."/>
            <person name="Eichler E.E."/>
            <person name="Gilna P."/>
            <person name="Lucas S.M."/>
            <person name="Myers R.M."/>
            <person name="Rubin E.M."/>
            <person name="Pennacchio L.A."/>
        </authorList>
    </citation>
    <scope>NUCLEOTIDE SEQUENCE [LARGE SCALE GENOMIC DNA]</scope>
</reference>
<reference key="3">
    <citation type="journal article" date="2004" name="Genome Res.">
        <title>The status, quality, and expansion of the NIH full-length cDNA project: the Mammalian Gene Collection (MGC).</title>
        <authorList>
            <consortium name="The MGC Project Team"/>
        </authorList>
    </citation>
    <scope>NUCLEOTIDE SEQUENCE [LARGE SCALE MRNA] (ISOFORM 1)</scope>
    <source>
        <tissue>Placenta</tissue>
        <tissue>Testis</tissue>
    </source>
</reference>
<reference key="4">
    <citation type="journal article" date="2003" name="Mol. Cell. Biol.">
        <title>Human Nudel and NudE as regulators of cytoplasmic dynein in poleward protein transport along the mitotic spindle.</title>
        <authorList>
            <person name="Yan X."/>
            <person name="Li F."/>
            <person name="Liang Y."/>
            <person name="Shen Y."/>
            <person name="Zhao X."/>
            <person name="Huang Q."/>
            <person name="Zhu X."/>
        </authorList>
    </citation>
    <scope>SUBCELLULAR LOCATION</scope>
    <scope>PHOSPHORYLATION</scope>
</reference>
<reference key="5">
    <citation type="journal article" date="2006" name="Mol. Biol. Cell">
        <title>Nudel contributes to microtubule anchoring at the mother centriole and is involved in both dynein-dependent and -independent centrosomal protein assembly.</title>
        <authorList>
            <person name="Guo J."/>
            <person name="Yang Z."/>
            <person name="Song W."/>
            <person name="Chen Q."/>
            <person name="Wang F."/>
            <person name="Zhang Q."/>
            <person name="Zhu X."/>
        </authorList>
    </citation>
    <scope>INTERACTION WITH DYNACTIN; TUBULIN GAMMA; PAFAH1B1; PCM1 AND PCNT</scope>
</reference>
<reference key="6">
    <citation type="journal article" date="2006" name="Oncogene">
        <title>p78/MCRS1 forms a complex with centrosomal protein Nde1 and is essential for cell viability.</title>
        <authorList>
            <person name="Hirohashi Y."/>
            <person name="Wang Q."/>
            <person name="Liu Q."/>
            <person name="Du X."/>
            <person name="Zhang H."/>
            <person name="Sato N."/>
            <person name="Greene M.I."/>
        </authorList>
    </citation>
    <scope>INTERACTION WITH MCRS1</scope>
    <scope>MUTAGENESIS OF THR-191; THR-215; THR-228; THR-243; THR-246 AND SER-282</scope>
</reference>
<reference key="7">
    <citation type="journal article" date="2006" name="Oncogene">
        <title>Centrosomal proteins Nde1 and Su48 form a complex regulated by phosphorylation.</title>
        <authorList>
            <person name="Hirohashi Y."/>
            <person name="Wang Q."/>
            <person name="Liu Q."/>
            <person name="Li B."/>
            <person name="Du X."/>
            <person name="Zhang H."/>
            <person name="Furuuchi K."/>
            <person name="Masuda K."/>
            <person name="Sato N."/>
            <person name="Greene M.I."/>
        </authorList>
    </citation>
    <scope>INTERACTION WITH ZNF365</scope>
    <scope>SUBCELLULAR LOCATION</scope>
    <scope>PHOSPHORYLATION</scope>
    <scope>MUTAGENESIS OF THR-191; THR-215; THR-228; THR-243; THR-246 AND SER-282</scope>
</reference>
<reference key="8">
    <citation type="journal article" date="2007" name="Curr. Biol.">
        <title>Cenp-F links kinetochores to Ndel1/Nde1/Lis1/dynein microtubule motor complexes.</title>
        <authorList>
            <person name="Vergnolle M.A.S."/>
            <person name="Taylor S.S."/>
        </authorList>
    </citation>
    <scope>FUNCTION</scope>
    <scope>INTERACTION WITH CENPF</scope>
    <scope>SUBCELLULAR LOCATION</scope>
</reference>
<reference key="9">
    <citation type="journal article" date="2008" name="J. Proteome Res.">
        <title>Combining protein-based IMAC, peptide-based IMAC, and MudPIT for efficient phosphoproteomic analysis.</title>
        <authorList>
            <person name="Cantin G.T."/>
            <person name="Yi W."/>
            <person name="Lu B."/>
            <person name="Park S.K."/>
            <person name="Xu T."/>
            <person name="Lee J.-D."/>
            <person name="Yates J.R. III"/>
        </authorList>
    </citation>
    <scope>IDENTIFICATION BY MASS SPECTROMETRY [LARGE SCALE ANALYSIS]</scope>
    <source>
        <tissue>Cervix carcinoma</tissue>
    </source>
</reference>
<reference key="10">
    <citation type="journal article" date="2008" name="Proc. Natl. Acad. Sci. U.S.A.">
        <title>A quantitative atlas of mitotic phosphorylation.</title>
        <authorList>
            <person name="Dephoure N."/>
            <person name="Zhou C."/>
            <person name="Villen J."/>
            <person name="Beausoleil S.A."/>
            <person name="Bakalarski C.E."/>
            <person name="Elledge S.J."/>
            <person name="Gygi S.P."/>
        </authorList>
    </citation>
    <scope>PHOSPHORYLATION [LARGE SCALE ANALYSIS] AT SER-211; THR-215; THR-228; SER-231; SER-239; THR-243; THR-246 AND SER-282</scope>
    <scope>IDENTIFICATION BY MASS SPECTROMETRY [LARGE SCALE ANALYSIS]</scope>
    <source>
        <tissue>Cervix carcinoma</tissue>
    </source>
</reference>
<reference key="11">
    <citation type="journal article" date="2010" name="EMBO J.">
        <title>Ndel1 palmitoylation: a new mean to regulate cytoplasmic dynein activity.</title>
        <authorList>
            <person name="Shmueli A."/>
            <person name="Segal M."/>
            <person name="Sapir T."/>
            <person name="Tsutsumi R."/>
            <person name="Noritake J."/>
            <person name="Bar A."/>
            <person name="Sapoznik S."/>
            <person name="Fukata Y."/>
            <person name="Orr I."/>
            <person name="Fukata M."/>
            <person name="Reiner O."/>
        </authorList>
    </citation>
    <scope>PALMITOYLATION AT CYS-274 BY ZDHHC2; ZDHHC3 AND ZDHHC7</scope>
</reference>
<reference key="12">
    <citation type="journal article" date="2010" name="Sci. Signal.">
        <title>Quantitative phosphoproteomics reveals widespread full phosphorylation site occupancy during mitosis.</title>
        <authorList>
            <person name="Olsen J.V."/>
            <person name="Vermeulen M."/>
            <person name="Santamaria A."/>
            <person name="Kumar C."/>
            <person name="Miller M.L."/>
            <person name="Jensen L.J."/>
            <person name="Gnad F."/>
            <person name="Cox J."/>
            <person name="Jensen T.S."/>
            <person name="Nigg E.A."/>
            <person name="Brunak S."/>
            <person name="Mann M."/>
        </authorList>
    </citation>
    <scope>PHOSPHORYLATION [LARGE SCALE ANALYSIS] AT THR-243; THR-246 AND SER-282</scope>
    <scope>IDENTIFICATION BY MASS SPECTROMETRY [LARGE SCALE ANALYSIS]</scope>
    <source>
        <tissue>Cervix carcinoma</tissue>
    </source>
</reference>
<reference key="13">
    <citation type="journal article" date="2011" name="Am. J. Hum. Genet.">
        <title>The essential role of centrosomal NDE1 in human cerebral cortex neurogenesis.</title>
        <authorList>
            <person name="Bakircioglu M."/>
            <person name="Carvalho O.P."/>
            <person name="Khurshid M."/>
            <person name="Cox J.J."/>
            <person name="Tuysuz B."/>
            <person name="Barak T."/>
            <person name="Yilmaz S."/>
            <person name="Caglayan O."/>
            <person name="Dincer A."/>
            <person name="Nicholas A.K."/>
            <person name="Quarrell O."/>
            <person name="Springell K."/>
            <person name="Karbani G."/>
            <person name="Malik S."/>
            <person name="Gannon C."/>
            <person name="Sheridan E."/>
            <person name="Crosier M."/>
            <person name="Lisgo S.N."/>
            <person name="Lindsay S."/>
            <person name="Bilguvar K."/>
            <person name="Gergely F."/>
            <person name="Gunel M."/>
            <person name="Woods C.G."/>
        </authorList>
    </citation>
    <scope>FUNCTION</scope>
    <scope>TISSUE SPECIFICITY</scope>
    <scope>SUBCELLULAR LOCATION</scope>
    <scope>INVOLVEMENT IN LIS4</scope>
</reference>
<reference key="14">
    <citation type="journal article" date="2011" name="Am. J. Hum. Genet.">
        <title>Human mutations in NDE1 cause extreme microcephaly with lissencephaly.</title>
        <authorList>
            <person name="Alkuraya F.S."/>
            <person name="Cai X."/>
            <person name="Emery C."/>
            <person name="Mochida G.H."/>
            <person name="Al-Dosari M.S."/>
            <person name="Felie J.M."/>
            <person name="Hill R.S."/>
            <person name="Barry B.J."/>
            <person name="Partlow J.N."/>
            <person name="Gascon G.G."/>
            <person name="Kentab A."/>
            <person name="Jan M."/>
            <person name="Shaheen R."/>
            <person name="Feng Y."/>
            <person name="Walsh C.A."/>
        </authorList>
    </citation>
    <scope>INVOLVEMENT IN LIS4</scope>
</reference>
<reference key="15">
    <citation type="journal article" date="2011" name="Am. J. Hum. Genet.">
        <authorList>
            <person name="Alkuraya F.S."/>
            <person name="Cai X."/>
            <person name="Emery C."/>
            <person name="Mochida G.H."/>
            <person name="Al-Dosari M.S."/>
            <person name="Felie J.M."/>
            <person name="Hill R.S."/>
            <person name="Barry B.J."/>
            <person name="Partlow J.N."/>
            <person name="Gascon G.G."/>
            <person name="Kentab A."/>
            <person name="Jan M."/>
            <person name="Shaheen R."/>
            <person name="Feng Y."/>
            <person name="Walsh C.A."/>
        </authorList>
    </citation>
    <scope>ERRATUM OF PUBMED:21529751</scope>
</reference>
<reference key="16">
    <citation type="journal article" date="2012" name="Neurogenetics">
        <title>Novel NDE1 homozygous mutation resulting in microhydranencephaly and not microlyssencephaly.</title>
        <authorList>
            <person name="Guven A."/>
            <person name="Gunduz A."/>
            <person name="Bozoglu T.M."/>
            <person name="Yalcinkaya C."/>
            <person name="Tolun A."/>
        </authorList>
    </citation>
    <scope>INVOLVEMENT IN MHAC</scope>
</reference>
<reference key="17">
    <citation type="journal article" date="2013" name="J. Proteome Res.">
        <title>Toward a comprehensive characterization of a human cancer cell phosphoproteome.</title>
        <authorList>
            <person name="Zhou H."/>
            <person name="Di Palma S."/>
            <person name="Preisinger C."/>
            <person name="Peng M."/>
            <person name="Polat A.N."/>
            <person name="Heck A.J."/>
            <person name="Mohammed S."/>
        </authorList>
    </citation>
    <scope>PHOSPHORYLATION [LARGE SCALE ANALYSIS] AT SER-211; SER-231; SER-239; SER-282 AND SER-309</scope>
    <scope>IDENTIFICATION BY MASS SPECTROMETRY [LARGE SCALE ANALYSIS]</scope>
    <source>
        <tissue>Cervix carcinoma</tissue>
        <tissue>Erythroleukemia</tissue>
    </source>
</reference>
<reference key="18">
    <citation type="journal article" date="2014" name="J. Proteomics">
        <title>An enzyme assisted RP-RPLC approach for in-depth analysis of human liver phosphoproteome.</title>
        <authorList>
            <person name="Bian Y."/>
            <person name="Song C."/>
            <person name="Cheng K."/>
            <person name="Dong M."/>
            <person name="Wang F."/>
            <person name="Huang J."/>
            <person name="Sun D."/>
            <person name="Wang L."/>
            <person name="Ye M."/>
            <person name="Zou H."/>
        </authorList>
    </citation>
    <scope>PHOSPHORYLATION [LARGE SCALE ANALYSIS] AT SER-231</scope>
    <scope>IDENTIFICATION BY MASS SPECTROMETRY [LARGE SCALE ANALYSIS]</scope>
    <source>
        <tissue>Liver</tissue>
    </source>
</reference>
<reference evidence="16" key="19">
    <citation type="journal article" date="2022" name="Structure">
        <title>Nde1 is a Rab9 effector for loading late endosomes to cytoplasmic dynein motor complex.</title>
        <authorList>
            <person name="Zhang Y."/>
            <person name="Chen Z."/>
            <person name="Wang F."/>
            <person name="Sun H."/>
            <person name="Zhu X."/>
            <person name="Ding J."/>
            <person name="Zhang T."/>
        </authorList>
    </citation>
    <scope>FUNCTION</scope>
    <scope>INTERACTION WITH RAB9A AND RAB9B</scope>
    <scope>SUBCELLULAR LOCATION</scope>
    <scope>MUTAGENESIS OF ILE-106; LYS-107; TYR-113 AND ILE-114</scope>
</reference>
<keyword id="KW-0002">3D-structure</keyword>
<keyword id="KW-0025">Alternative splicing</keyword>
<keyword id="KW-0131">Cell cycle</keyword>
<keyword id="KW-0132">Cell division</keyword>
<keyword id="KW-0137">Centromere</keyword>
<keyword id="KW-0158">Chromosome</keyword>
<keyword id="KW-0175">Coiled coil</keyword>
<keyword id="KW-0963">Cytoplasm</keyword>
<keyword id="KW-0968">Cytoplasmic vesicle</keyword>
<keyword id="KW-0206">Cytoskeleton</keyword>
<keyword id="KW-0217">Developmental protein</keyword>
<keyword id="KW-0221">Differentiation</keyword>
<keyword id="KW-0995">Kinetochore</keyword>
<keyword id="KW-0449">Lipoprotein</keyword>
<keyword id="KW-0451">Lissencephaly</keyword>
<keyword id="KW-0472">Membrane</keyword>
<keyword id="KW-0493">Microtubule</keyword>
<keyword id="KW-0498">Mitosis</keyword>
<keyword id="KW-0524">Neurogenesis</keyword>
<keyword id="KW-0564">Palmitate</keyword>
<keyword id="KW-0597">Phosphoprotein</keyword>
<keyword id="KW-1267">Proteomics identification</keyword>
<keyword id="KW-1185">Reference proteome</keyword>
<protein>
    <recommendedName>
        <fullName>Nuclear distribution protein nudE homolog 1</fullName>
        <shortName>NudE</shortName>
    </recommendedName>
</protein>
<name>NDE1_HUMAN</name>
<accession>Q9NXR1</accession>
<accession>Q49AQ2</accession>
<feature type="chain" id="PRO_0000240202" description="Nuclear distribution protein nudE homolog 1">
    <location>
        <begin position="1"/>
        <end position="335"/>
    </location>
</feature>
<feature type="region of interest" description="Self-association" evidence="1">
    <location>
        <begin position="1"/>
        <end position="93"/>
    </location>
</feature>
<feature type="region of interest" description="Interaction with PAFAH1B1" evidence="1">
    <location>
        <begin position="88"/>
        <end position="156"/>
    </location>
</feature>
<feature type="region of interest" description="Interaction with CENPF" evidence="1">
    <location>
        <begin position="167"/>
        <end position="290"/>
    </location>
</feature>
<feature type="region of interest" description="Disordered" evidence="4">
    <location>
        <begin position="181"/>
        <end position="246"/>
    </location>
</feature>
<feature type="region of interest" description="Disordered" evidence="4">
    <location>
        <begin position="279"/>
        <end position="335"/>
    </location>
</feature>
<feature type="coiled-coil region" evidence="3">
    <location>
        <begin position="18"/>
        <end position="188"/>
    </location>
</feature>
<feature type="compositionally biased region" description="Polar residues" evidence="4">
    <location>
        <begin position="204"/>
        <end position="214"/>
    </location>
</feature>
<feature type="compositionally biased region" description="Basic and acidic residues" evidence="4">
    <location>
        <begin position="296"/>
        <end position="305"/>
    </location>
</feature>
<feature type="compositionally biased region" description="Low complexity" evidence="4">
    <location>
        <begin position="325"/>
        <end position="335"/>
    </location>
</feature>
<feature type="modified residue" description="Phosphoserine" evidence="17 19">
    <location>
        <position position="211"/>
    </location>
</feature>
<feature type="modified residue" description="Phosphothreonine" evidence="17">
    <location>
        <position position="215"/>
    </location>
</feature>
<feature type="modified residue" description="Phosphothreonine" evidence="17">
    <location>
        <position position="228"/>
    </location>
</feature>
<feature type="modified residue" description="Phosphoserine" evidence="17 19 20">
    <location>
        <position position="231"/>
    </location>
</feature>
<feature type="modified residue" description="Phosphoserine" evidence="17 19">
    <location>
        <position position="239"/>
    </location>
</feature>
<feature type="modified residue" description="Phosphothreonine" evidence="17 18">
    <location>
        <position position="243"/>
    </location>
</feature>
<feature type="modified residue" description="Phosphothreonine" evidence="17 18">
    <location>
        <position position="246"/>
    </location>
</feature>
<feature type="modified residue" description="Phosphoserine" evidence="17 18 19">
    <location>
        <position position="282"/>
    </location>
</feature>
<feature type="modified residue" description="Phosphoserine" evidence="19">
    <location>
        <position position="309"/>
    </location>
</feature>
<feature type="lipid moiety-binding region" description="S-palmitoyl cysteine; by ZDHHC2, ZDHHC3 and ZDHHC7" evidence="9">
    <location>
        <position position="274"/>
    </location>
</feature>
<feature type="splice variant" id="VSP_059512" description="In isoform 2.">
    <original>DTSCRWLSKSTTRSSSSC</original>
    <variation>GKRLEFGKPPSHMSSSPLPSAQGVVKMLL</variation>
    <location>
        <begin position="318"/>
        <end position="335"/>
    </location>
</feature>
<feature type="mutagenesis site" description="Loss of interaction with RAB9A. Decreased enrichment to RAB9A-associated intracellular vesicles." evidence="13">
    <original>I</original>
    <variation>D</variation>
    <location>
        <position position="106"/>
    </location>
</feature>
<feature type="mutagenesis site" description="Decreased interaction with RAB9A." evidence="13">
    <original>K</original>
    <variation>A</variation>
    <location>
        <position position="107"/>
    </location>
</feature>
<feature type="mutagenesis site" description="Loss of interaction with RAB9A." evidence="13">
    <original>Y</original>
    <variation>D</variation>
    <location>
        <position position="113"/>
    </location>
</feature>
<feature type="mutagenesis site" description="Loss of interaction with RAB9A. Decreased enrichment to RAB9A-associated intracellular vesicles." evidence="13">
    <original>I</original>
    <variation>D</variation>
    <location>
        <position position="114"/>
    </location>
</feature>
<feature type="mutagenesis site" description="Loss of centrosomal localization, reduced ZNF365-binding and loss of interaction with MCRS1; when associated with E-215; E-228; E-243; E-246 and E-282." evidence="6 7">
    <original>T</original>
    <variation>E</variation>
    <location>
        <position position="191"/>
    </location>
</feature>
<feature type="mutagenesis site" description="Retained on spindle poles during mitosis, no loss of phosphorylation in vivo and increased ZNF365-binding; when associated with V-215; V-228; V-243; V-246 and A-282." evidence="7">
    <original>T</original>
    <variation>V</variation>
    <location>
        <position position="191"/>
    </location>
</feature>
<feature type="mutagenesis site" description="Loss of centrosomal localization, reduced ZNF365-binding and loss of interaction with MCRS1; when associated with E-191; E-228; E-243; E-246 and E-282." evidence="6 7">
    <original>T</original>
    <variation>E</variation>
    <location>
        <position position="215"/>
    </location>
</feature>
<feature type="mutagenesis site" description="Retained on spindle poles during mitosis, no loss of phosphorylation in vivo and increased ZNF365-binding; when associated with V-191; V-228; V-243; V-246 and A-282." evidence="7">
    <original>T</original>
    <variation>V</variation>
    <location>
        <position position="215"/>
    </location>
</feature>
<feature type="mutagenesis site" description="Loss of centrosomal localization, reduced ZNF365-binding and loss of interaction with MCRS1; when associated with E-191; E-215; E-243; E-246 and E-282." evidence="6 7">
    <original>T</original>
    <variation>E</variation>
    <location>
        <position position="228"/>
    </location>
</feature>
<feature type="mutagenesis site" description="Retained on spindle poles during mitosis, no loss of phosphorylation in vivo and increased ZNF365-binding; when associated with V-191; V-215; V-243; V-246 and A-282." evidence="7">
    <original>T</original>
    <variation>V</variation>
    <location>
        <position position="228"/>
    </location>
</feature>
<feature type="mutagenesis site" description="Loss of centrosomal localization, reduced ZNF365-binding and loss of interaction with MCRS1; when associated with E-191; E-215; E-228; E-246 and E-282." evidence="6 7">
    <original>T</original>
    <variation>E</variation>
    <location>
        <position position="243"/>
    </location>
</feature>
<feature type="mutagenesis site" description="Retained on spindle poles during mitosis, no loss of phosphorylation in vivo and increased ZNF365-binding; when associated with V-191; V-215; V-228; V-246 and A-282." evidence="7">
    <original>T</original>
    <variation>V</variation>
    <location>
        <position position="243"/>
    </location>
</feature>
<feature type="mutagenesis site" description="Loss of centrosomal localization, reduced ZNF365-binding and loss of interaction with MCRS1; when associated with E-191; E-215; E-228; E-243 and E-282." evidence="6 7">
    <original>T</original>
    <variation>E</variation>
    <location>
        <position position="246"/>
    </location>
</feature>
<feature type="mutagenesis site" description="Retained on spindle poles during mitosis, no loss of phosphorylation in vivo and increased ZNF365-binding; when associated with V-191; V-215; V-228; V-243 and A-282." evidence="7">
    <original>T</original>
    <variation>V</variation>
    <location>
        <position position="246"/>
    </location>
</feature>
<feature type="mutagenesis site" description="Retained on spindle poles during mitosis, no loss of phosphorylation in vivo and increased ZNF365-binding; when associated with V-191; V-215; V-228; V-243 and V-246." evidence="7">
    <original>S</original>
    <variation>A</variation>
    <location>
        <position position="282"/>
    </location>
</feature>
<feature type="mutagenesis site" description="Loss of centrosomal localization, reduced ZNF365-binding and loss of interaction with MCRS1; when associated with E-191; E-215; E-228; E-243 and E-246." evidence="6 7">
    <original>S</original>
    <variation>E</variation>
    <location>
        <position position="282"/>
    </location>
</feature>
<feature type="sequence conflict" description="In Ref. 3; AAH33900." evidence="14" ref="3">
    <original>T</original>
    <variation>I</variation>
    <location>
        <position position="191"/>
    </location>
</feature>
<feature type="helix" evidence="21">
    <location>
        <begin position="99"/>
        <end position="129"/>
    </location>
</feature>
<dbReference type="EMBL" id="AK000108">
    <property type="protein sequence ID" value="BAA90949.1"/>
    <property type="molecule type" value="mRNA"/>
</dbReference>
<dbReference type="EMBL" id="AC026401">
    <property type="status" value="NOT_ANNOTATED_CDS"/>
    <property type="molecule type" value="Genomic_DNA"/>
</dbReference>
<dbReference type="EMBL" id="AF001548">
    <property type="status" value="NOT_ANNOTATED_CDS"/>
    <property type="molecule type" value="Genomic_DNA"/>
</dbReference>
<dbReference type="EMBL" id="BC001421">
    <property type="protein sequence ID" value="AAH01421.1"/>
    <property type="molecule type" value="mRNA"/>
</dbReference>
<dbReference type="EMBL" id="BC033900">
    <property type="protein sequence ID" value="AAH33900.1"/>
    <property type="molecule type" value="mRNA"/>
</dbReference>
<dbReference type="CCDS" id="CCDS10564.1">
    <molecule id="Q9NXR1-2"/>
</dbReference>
<dbReference type="RefSeq" id="NP_001137451.1">
    <molecule id="Q9NXR1-2"/>
    <property type="nucleotide sequence ID" value="NM_001143979.2"/>
</dbReference>
<dbReference type="RefSeq" id="NP_060138.1">
    <molecule id="Q9NXR1-2"/>
    <property type="nucleotide sequence ID" value="NM_017668.3"/>
</dbReference>
<dbReference type="RefSeq" id="XP_016878838.1">
    <molecule id="Q9NXR1-1"/>
    <property type="nucleotide sequence ID" value="XM_017023349.3"/>
</dbReference>
<dbReference type="RefSeq" id="XP_016878845.1">
    <property type="nucleotide sequence ID" value="XM_017023356.1"/>
</dbReference>
<dbReference type="RefSeq" id="XP_054185079.1">
    <molecule id="Q9NXR1-1"/>
    <property type="nucleotide sequence ID" value="XM_054329104.1"/>
</dbReference>
<dbReference type="RefSeq" id="XP_054236512.1">
    <molecule id="Q9NXR1-1"/>
    <property type="nucleotide sequence ID" value="XM_054380537.1"/>
</dbReference>
<dbReference type="PDB" id="7E1T">
    <property type="method" value="X-ray"/>
    <property type="resolution" value="2.45 A"/>
    <property type="chains" value="C/D=98-168"/>
</dbReference>
<dbReference type="PDBsum" id="7E1T"/>
<dbReference type="SMR" id="Q9NXR1"/>
<dbReference type="BioGRID" id="120175">
    <property type="interactions" value="132"/>
</dbReference>
<dbReference type="CORUM" id="Q9NXR1"/>
<dbReference type="FunCoup" id="Q9NXR1">
    <property type="interactions" value="1107"/>
</dbReference>
<dbReference type="IntAct" id="Q9NXR1">
    <property type="interactions" value="82"/>
</dbReference>
<dbReference type="MINT" id="Q9NXR1"/>
<dbReference type="STRING" id="9606.ENSP00000379643"/>
<dbReference type="GlyGen" id="Q9NXR1">
    <property type="glycosylation" value="1 site, 1 O-linked glycan (1 site)"/>
</dbReference>
<dbReference type="iPTMnet" id="Q9NXR1"/>
<dbReference type="MetOSite" id="Q9NXR1"/>
<dbReference type="PhosphoSitePlus" id="Q9NXR1"/>
<dbReference type="SwissPalm" id="Q9NXR1"/>
<dbReference type="BioMuta" id="NDE1"/>
<dbReference type="DMDM" id="108860813"/>
<dbReference type="jPOST" id="Q9NXR1"/>
<dbReference type="MassIVE" id="Q9NXR1"/>
<dbReference type="PaxDb" id="9606-ENSP00000379643"/>
<dbReference type="PeptideAtlas" id="Q9NXR1"/>
<dbReference type="ProteomicsDB" id="83120">
    <molecule id="Q9NXR1-1"/>
</dbReference>
<dbReference type="ProteomicsDB" id="83121">
    <molecule id="Q9NXR1-2"/>
</dbReference>
<dbReference type="Pumba" id="Q9NXR1"/>
<dbReference type="Antibodypedia" id="11751">
    <property type="antibodies" value="279 antibodies from 32 providers"/>
</dbReference>
<dbReference type="DNASU" id="54820"/>
<dbReference type="Ensembl" id="ENST00000396354.6">
    <molecule id="Q9NXR1-2"/>
    <property type="protein sequence ID" value="ENSP00000379642.1"/>
    <property type="gene ID" value="ENSG00000072864.16"/>
</dbReference>
<dbReference type="Ensembl" id="ENST00000396355.5">
    <molecule id="Q9NXR1-2"/>
    <property type="protein sequence ID" value="ENSP00000379643.1"/>
    <property type="gene ID" value="ENSG00000072864.16"/>
</dbReference>
<dbReference type="Ensembl" id="ENST00000631844.1">
    <molecule id="Q9NXR1-2"/>
    <property type="protein sequence ID" value="ENSP00000488199.1"/>
    <property type="gene ID" value="ENSG00000275911.3"/>
</dbReference>
<dbReference type="Ensembl" id="ENST00000631923.1">
    <molecule id="Q9NXR1-2"/>
    <property type="protein sequence ID" value="ENSP00000488050.1"/>
    <property type="gene ID" value="ENSG00000275911.3"/>
</dbReference>
<dbReference type="Ensembl" id="ENST00000674554.1">
    <molecule id="Q9NXR1-2"/>
    <property type="protein sequence ID" value="ENSP00000502635.1"/>
    <property type="gene ID" value="ENSG00000072864.16"/>
</dbReference>
<dbReference type="Ensembl" id="ENST00000674888.1">
    <molecule id="Q9NXR1-2"/>
    <property type="protein sequence ID" value="ENSP00000501936.1"/>
    <property type="gene ID" value="ENSG00000072864.16"/>
</dbReference>
<dbReference type="Ensembl" id="ENST00000675926.1">
    <molecule id="Q9NXR1-2"/>
    <property type="protein sequence ID" value="ENSP00000502354.1"/>
    <property type="gene ID" value="ENSG00000072864.16"/>
</dbReference>
<dbReference type="Ensembl" id="ENST00000675951.1">
    <molecule id="Q9NXR1-2"/>
    <property type="protein sequence ID" value="ENSP00000502160.1"/>
    <property type="gene ID" value="ENSG00000072864.16"/>
</dbReference>
<dbReference type="GeneID" id="54820"/>
<dbReference type="KEGG" id="hsa:54820"/>
<dbReference type="MANE-Select" id="ENST00000396354.6">
    <property type="protein sequence ID" value="ENSP00000379642.1"/>
    <property type="RefSeq nucleotide sequence ID" value="NM_017668.3"/>
    <property type="RefSeq protein sequence ID" value="NP_060138.1"/>
</dbReference>
<dbReference type="AGR" id="HGNC:17619"/>
<dbReference type="CTD" id="54820"/>
<dbReference type="DisGeNET" id="54820"/>
<dbReference type="GeneCards" id="NDE1"/>
<dbReference type="HGNC" id="HGNC:17619">
    <property type="gene designation" value="NDE1"/>
</dbReference>
<dbReference type="HPA" id="ENSG00000072864">
    <property type="expression patterns" value="Low tissue specificity"/>
</dbReference>
<dbReference type="MalaCards" id="NDE1"/>
<dbReference type="MIM" id="605013">
    <property type="type" value="phenotype"/>
</dbReference>
<dbReference type="MIM" id="609449">
    <property type="type" value="gene"/>
</dbReference>
<dbReference type="MIM" id="614019">
    <property type="type" value="phenotype"/>
</dbReference>
<dbReference type="neXtProt" id="NX_Q9NXR1"/>
<dbReference type="OpenTargets" id="ENSG00000072864"/>
<dbReference type="Orphanet" id="2177">
    <property type="disease" value="Hydranencephaly"/>
</dbReference>
<dbReference type="Orphanet" id="89844">
    <property type="disease" value="Lissencephaly syndrome, Norman-Roberts type"/>
</dbReference>
<dbReference type="Orphanet" id="443162">
    <property type="disease" value="NDE1-related microhydranencephaly"/>
</dbReference>
<dbReference type="PharmGKB" id="PA128394673"/>
<dbReference type="VEuPathDB" id="HostDB:ENSG00000072864"/>
<dbReference type="eggNOG" id="KOG1853">
    <property type="taxonomic scope" value="Eukaryota"/>
</dbReference>
<dbReference type="GeneTree" id="ENSGT00390000000111"/>
<dbReference type="HOGENOM" id="CLU_057872_1_0_1"/>
<dbReference type="InParanoid" id="Q9NXR1"/>
<dbReference type="OMA" id="MVEPTTH"/>
<dbReference type="OrthoDB" id="5877028at2759"/>
<dbReference type="PAN-GO" id="Q9NXR1">
    <property type="GO annotations" value="12 GO annotations based on evolutionary models"/>
</dbReference>
<dbReference type="PhylomeDB" id="Q9NXR1"/>
<dbReference type="TreeFam" id="TF325693"/>
<dbReference type="PathwayCommons" id="Q9NXR1"/>
<dbReference type="Reactome" id="R-HSA-141444">
    <property type="pathway name" value="Amplification of signal from unattached kinetochores via a MAD2 inhibitory signal"/>
</dbReference>
<dbReference type="Reactome" id="R-HSA-2467813">
    <property type="pathway name" value="Separation of Sister Chromatids"/>
</dbReference>
<dbReference type="Reactome" id="R-HSA-2500257">
    <property type="pathway name" value="Resolution of Sister Chromatid Cohesion"/>
</dbReference>
<dbReference type="Reactome" id="R-HSA-2565942">
    <property type="pathway name" value="Regulation of PLK1 Activity at G2/M Transition"/>
</dbReference>
<dbReference type="Reactome" id="R-HSA-380259">
    <property type="pathway name" value="Loss of Nlp from mitotic centrosomes"/>
</dbReference>
<dbReference type="Reactome" id="R-HSA-380270">
    <property type="pathway name" value="Recruitment of mitotic centrosome proteins and complexes"/>
</dbReference>
<dbReference type="Reactome" id="R-HSA-380284">
    <property type="pathway name" value="Loss of proteins required for interphase microtubule organization from the centrosome"/>
</dbReference>
<dbReference type="Reactome" id="R-HSA-380320">
    <property type="pathway name" value="Recruitment of NuMA to mitotic centrosomes"/>
</dbReference>
<dbReference type="Reactome" id="R-HSA-5620912">
    <property type="pathway name" value="Anchoring of the basal body to the plasma membrane"/>
</dbReference>
<dbReference type="Reactome" id="R-HSA-5663220">
    <property type="pathway name" value="RHO GTPases Activate Formins"/>
</dbReference>
<dbReference type="Reactome" id="R-HSA-68877">
    <property type="pathway name" value="Mitotic Prometaphase"/>
</dbReference>
<dbReference type="Reactome" id="R-HSA-8854518">
    <property type="pathway name" value="AURKA Activation by TPX2"/>
</dbReference>
<dbReference type="Reactome" id="R-HSA-9648025">
    <property type="pathway name" value="EML4 and NUDC in mitotic spindle formation"/>
</dbReference>
<dbReference type="SignaLink" id="Q9NXR1"/>
<dbReference type="SIGNOR" id="Q9NXR1"/>
<dbReference type="BioGRID-ORCS" id="54820">
    <property type="hits" value="347 hits in 1160 CRISPR screens"/>
</dbReference>
<dbReference type="CD-CODE" id="8C2F96ED">
    <property type="entry name" value="Centrosome"/>
</dbReference>
<dbReference type="ChiTaRS" id="NDE1">
    <property type="organism name" value="human"/>
</dbReference>
<dbReference type="GeneWiki" id="NDE1"/>
<dbReference type="GenomeRNAi" id="54820"/>
<dbReference type="Pharos" id="Q9NXR1">
    <property type="development level" value="Tbio"/>
</dbReference>
<dbReference type="PRO" id="PR:Q9NXR1"/>
<dbReference type="Proteomes" id="UP000005640">
    <property type="component" value="Chromosome 16"/>
</dbReference>
<dbReference type="RNAct" id="Q9NXR1">
    <property type="molecule type" value="protein"/>
</dbReference>
<dbReference type="Bgee" id="ENSG00000072864">
    <property type="expression patterns" value="Expressed in colonic epithelium and 105 other cell types or tissues"/>
</dbReference>
<dbReference type="ExpressionAtlas" id="Q9NXR1">
    <property type="expression patterns" value="baseline and differential"/>
</dbReference>
<dbReference type="GO" id="GO:0005813">
    <property type="term" value="C:centrosome"/>
    <property type="evidence" value="ECO:0000314"/>
    <property type="project" value="UniProtKB"/>
</dbReference>
<dbReference type="GO" id="GO:0032154">
    <property type="term" value="C:cleavage furrow"/>
    <property type="evidence" value="ECO:0007669"/>
    <property type="project" value="UniProtKB-SubCell"/>
</dbReference>
<dbReference type="GO" id="GO:0030659">
    <property type="term" value="C:cytoplasmic vesicle membrane"/>
    <property type="evidence" value="ECO:0007669"/>
    <property type="project" value="UniProtKB-SubCell"/>
</dbReference>
<dbReference type="GO" id="GO:0005829">
    <property type="term" value="C:cytosol"/>
    <property type="evidence" value="ECO:0000304"/>
    <property type="project" value="Reactome"/>
</dbReference>
<dbReference type="GO" id="GO:0005871">
    <property type="term" value="C:kinesin complex"/>
    <property type="evidence" value="ECO:0000318"/>
    <property type="project" value="GO_Central"/>
</dbReference>
<dbReference type="GO" id="GO:0000776">
    <property type="term" value="C:kinetochore"/>
    <property type="evidence" value="ECO:0000314"/>
    <property type="project" value="UniProtKB"/>
</dbReference>
<dbReference type="GO" id="GO:0016020">
    <property type="term" value="C:membrane"/>
    <property type="evidence" value="ECO:0007005"/>
    <property type="project" value="UniProtKB"/>
</dbReference>
<dbReference type="GO" id="GO:0005874">
    <property type="term" value="C:microtubule"/>
    <property type="evidence" value="ECO:0007669"/>
    <property type="project" value="UniProtKB-KW"/>
</dbReference>
<dbReference type="GO" id="GO:0031616">
    <property type="term" value="C:spindle pole centrosome"/>
    <property type="evidence" value="ECO:0000250"/>
    <property type="project" value="UniProtKB"/>
</dbReference>
<dbReference type="GO" id="GO:0045202">
    <property type="term" value="C:synapse"/>
    <property type="evidence" value="ECO:0007669"/>
    <property type="project" value="Ensembl"/>
</dbReference>
<dbReference type="GO" id="GO:0042802">
    <property type="term" value="F:identical protein binding"/>
    <property type="evidence" value="ECO:0000353"/>
    <property type="project" value="IntAct"/>
</dbReference>
<dbReference type="GO" id="GO:0008017">
    <property type="term" value="F:microtubule binding"/>
    <property type="evidence" value="ECO:0000250"/>
    <property type="project" value="UniProtKB"/>
</dbReference>
<dbReference type="GO" id="GO:0019904">
    <property type="term" value="F:protein domain specific binding"/>
    <property type="evidence" value="ECO:0007669"/>
    <property type="project" value="Ensembl"/>
</dbReference>
<dbReference type="GO" id="GO:0051301">
    <property type="term" value="P:cell division"/>
    <property type="evidence" value="ECO:0007669"/>
    <property type="project" value="UniProtKB-KW"/>
</dbReference>
<dbReference type="GO" id="GO:0016477">
    <property type="term" value="P:cell migration"/>
    <property type="evidence" value="ECO:0000318"/>
    <property type="project" value="GO_Central"/>
</dbReference>
<dbReference type="GO" id="GO:0051298">
    <property type="term" value="P:centrosome duplication"/>
    <property type="evidence" value="ECO:0000250"/>
    <property type="project" value="UniProtKB"/>
</dbReference>
<dbReference type="GO" id="GO:0051642">
    <property type="term" value="P:centrosome localization"/>
    <property type="evidence" value="ECO:0000318"/>
    <property type="project" value="GO_Central"/>
</dbReference>
<dbReference type="GO" id="GO:0021987">
    <property type="term" value="P:cerebral cortex development"/>
    <property type="evidence" value="ECO:0000315"/>
    <property type="project" value="UniProtKB"/>
</dbReference>
<dbReference type="GO" id="GO:0007059">
    <property type="term" value="P:chromosome segregation"/>
    <property type="evidence" value="ECO:0000318"/>
    <property type="project" value="GO_Central"/>
</dbReference>
<dbReference type="GO" id="GO:0051303">
    <property type="term" value="P:establishment of chromosome localization"/>
    <property type="evidence" value="ECO:0000315"/>
    <property type="project" value="UniProtKB"/>
</dbReference>
<dbReference type="GO" id="GO:0000132">
    <property type="term" value="P:establishment of mitotic spindle orientation"/>
    <property type="evidence" value="ECO:0000315"/>
    <property type="project" value="UniProtKB"/>
</dbReference>
<dbReference type="GO" id="GO:0007020">
    <property type="term" value="P:microtubule nucleation"/>
    <property type="evidence" value="ECO:0000318"/>
    <property type="project" value="GO_Central"/>
</dbReference>
<dbReference type="GO" id="GO:0007100">
    <property type="term" value="P:mitotic centrosome separation"/>
    <property type="evidence" value="ECO:0000318"/>
    <property type="project" value="GO_Central"/>
</dbReference>
<dbReference type="GO" id="GO:0007405">
    <property type="term" value="P:neuroblast proliferation"/>
    <property type="evidence" value="ECO:0007669"/>
    <property type="project" value="Ensembl"/>
</dbReference>
<dbReference type="GO" id="GO:0001764">
    <property type="term" value="P:neuron migration"/>
    <property type="evidence" value="ECO:0007669"/>
    <property type="project" value="Ensembl"/>
</dbReference>
<dbReference type="GO" id="GO:0047496">
    <property type="term" value="P:vesicle transport along microtubule"/>
    <property type="evidence" value="ECO:0000318"/>
    <property type="project" value="GO_Central"/>
</dbReference>
<dbReference type="Gene3D" id="6.10.250.1080">
    <property type="match status" value="1"/>
</dbReference>
<dbReference type="InterPro" id="IPR033494">
    <property type="entry name" value="NUDE"/>
</dbReference>
<dbReference type="InterPro" id="IPR006964">
    <property type="entry name" value="NUDE_dom"/>
</dbReference>
<dbReference type="PANTHER" id="PTHR10921">
    <property type="entry name" value="NUCLEAR DISTRIBUTION PROTEIN NUDE HOMOLOG 1"/>
    <property type="match status" value="1"/>
</dbReference>
<dbReference type="PANTHER" id="PTHR10921:SF2">
    <property type="entry name" value="NUCLEAR DISTRIBUTION PROTEIN NUDE HOMOLOG 1"/>
    <property type="match status" value="1"/>
</dbReference>
<dbReference type="Pfam" id="PF04880">
    <property type="entry name" value="NUDE_C"/>
    <property type="match status" value="1"/>
</dbReference>
<organism>
    <name type="scientific">Homo sapiens</name>
    <name type="common">Human</name>
    <dbReference type="NCBI Taxonomy" id="9606"/>
    <lineage>
        <taxon>Eukaryota</taxon>
        <taxon>Metazoa</taxon>
        <taxon>Chordata</taxon>
        <taxon>Craniata</taxon>
        <taxon>Vertebrata</taxon>
        <taxon>Euteleostomi</taxon>
        <taxon>Mammalia</taxon>
        <taxon>Eutheria</taxon>
        <taxon>Euarchontoglires</taxon>
        <taxon>Primates</taxon>
        <taxon>Haplorrhini</taxon>
        <taxon>Catarrhini</taxon>
        <taxon>Hominidae</taxon>
        <taxon>Homo</taxon>
    </lineage>
</organism>
<evidence type="ECO:0000250" key="1"/>
<evidence type="ECO:0000250" key="2">
    <source>
        <dbReference type="UniProtKB" id="Q9CZA6"/>
    </source>
</evidence>
<evidence type="ECO:0000255" key="3"/>
<evidence type="ECO:0000256" key="4">
    <source>
        <dbReference type="SAM" id="MobiDB-lite"/>
    </source>
</evidence>
<evidence type="ECO:0000269" key="5">
    <source>
    </source>
</evidence>
<evidence type="ECO:0000269" key="6">
    <source>
    </source>
</evidence>
<evidence type="ECO:0000269" key="7">
    <source>
    </source>
</evidence>
<evidence type="ECO:0000269" key="8">
    <source>
    </source>
</evidence>
<evidence type="ECO:0000269" key="9">
    <source>
    </source>
</evidence>
<evidence type="ECO:0000269" key="10">
    <source>
    </source>
</evidence>
<evidence type="ECO:0000269" key="11">
    <source>
    </source>
</evidence>
<evidence type="ECO:0000269" key="12">
    <source>
    </source>
</evidence>
<evidence type="ECO:0000269" key="13">
    <source>
    </source>
</evidence>
<evidence type="ECO:0000305" key="14"/>
<evidence type="ECO:0000312" key="15">
    <source>
        <dbReference type="HGNC" id="HGNC:17619"/>
    </source>
</evidence>
<evidence type="ECO:0007744" key="16">
    <source>
        <dbReference type="PDB" id="7E1T"/>
    </source>
</evidence>
<evidence type="ECO:0007744" key="17">
    <source>
    </source>
</evidence>
<evidence type="ECO:0007744" key="18">
    <source>
    </source>
</evidence>
<evidence type="ECO:0007744" key="19">
    <source>
    </source>
</evidence>
<evidence type="ECO:0007744" key="20">
    <source>
    </source>
</evidence>
<evidence type="ECO:0007829" key="21">
    <source>
        <dbReference type="PDB" id="7E1T"/>
    </source>
</evidence>
<sequence length="335" mass="37721">MEDSGKTFSSEEEEANYWKDLAMTYKQRAENTQEELREFQEGSREYEAELETQLQQIETRNRDLLSENNRLRMELETIKEKFEVQHSEGYRQISALEDDLAQTKAIKDQLQKYIRELEQANDDLERAKRATIMSLEDFEQRLNQAIERNAFLESELDEKENLLESVQRLKDEARDLRQELAVQQKQEKPRTPMPSSVEAERTDTAVQATGSVPSTPIAHRGPSSSLNTPGSFRRGLDDSTGGTPLTPAARISALNIVGDLLRKVGALESKLASCRNLVYDQSPNRTGGPASGRSSKNRDGGERRPSSTSVPLGDKGLDTSCRWLSKSTTRSSSSC</sequence>
<proteinExistence type="evidence at protein level"/>
<comment type="function">
    <text evidence="8 11 13">Required for centrosome duplication and formation and function of the mitotic spindle. Essential for the development of the cerebral cortex. May regulate the production of neurons by controlling the orientation of the mitotic spindle during division of cortical neuronal progenitors of the proliferative ventricular zone of the brain. Orientation of the division plane perpendicular to the layers of the cortex gives rise to two proliferative neuronal progenitors whereas parallel orientation of the division plane yields one proliferative neuronal progenitor and a postmitotic neuron. A premature shift towards a neuronal fate within the progenitor population may result in an overall reduction in the final number of neurons and an increase in the number of neurons in the deeper layers of the cortex. Acts as a RAB9A/B effector that tethers RAB9-associated late endosomes to the dynein motor for their retrograde transport to the trans-Golgi network (PubMed:34793709).</text>
</comment>
<comment type="subunit">
    <text evidence="2 5 6 7 8 13">Homodimer (PubMed:34793709). Interacts with CNTRL, LIS1, dynein, SLMAP and TCP1 (By similarity). Interacts with CENPF, dynactin, tubulin gamma, PAFAH1B1, PCM1 and PCNT. Interacts with ZNF365 (PubMed:16291865, PubMed:16682949, PubMed:17600710). Interacts with GTP-bound RAB9A and RAB9B; the interaction leads to RAB9-dynein motor tethering (PubMed:34793709). Interacts (via C-terminus) with MCRS1 (via C-terminus); phosphorylation of NDE1 inhibits the interaction (PubMed:16547491).</text>
</comment>
<comment type="interaction">
    <interactant intactId="EBI-941227">
        <id>Q9NXR1</id>
    </interactant>
    <interactant intactId="EBI-529989">
        <id>Q9NRI5</id>
        <label>DISC1</label>
    </interactant>
    <organismsDiffer>false</organismsDiffer>
    <experiments>7</experiments>
</comment>
<comment type="interaction">
    <interactant intactId="EBI-941227">
        <id>Q9NXR1</id>
    </interactant>
    <interactant intactId="EBI-941227">
        <id>Q9NXR1</id>
        <label>NDE1</label>
    </interactant>
    <organismsDiffer>false</organismsDiffer>
    <experiments>5</experiments>
</comment>
<comment type="interaction">
    <interactant intactId="EBI-941227">
        <id>Q9NXR1</id>
    </interactant>
    <interactant intactId="EBI-928842">
        <id>Q9GZM8</id>
        <label>NDEL1</label>
    </interactant>
    <organismsDiffer>false</organismsDiffer>
    <experiments>5</experiments>
</comment>
<comment type="interaction">
    <interactant intactId="EBI-941227">
        <id>Q9NXR1</id>
    </interactant>
    <interactant intactId="EBI-356498">
        <id>P62258</id>
        <label>YWHAE</label>
    </interactant>
    <organismsDiffer>false</organismsDiffer>
    <experiments>3</experiments>
</comment>
<comment type="interaction">
    <interactant intactId="EBI-941227">
        <id>Q9NXR1</id>
    </interactant>
    <interactant intactId="EBI-941182">
        <id>Q70YC5</id>
        <label>ZNF365</label>
    </interactant>
    <organismsDiffer>false</organismsDiffer>
    <experiments>3</experiments>
</comment>
<comment type="subcellular location">
    <subcellularLocation>
        <location>Cytoplasm</location>
        <location>Cytoskeleton</location>
    </subcellularLocation>
    <subcellularLocation>
        <location>Cytoplasm</location>
        <location>Cytoskeleton</location>
        <location>Microtubule organizing center</location>
        <location>Centrosome</location>
    </subcellularLocation>
    <subcellularLocation>
        <location>Chromosome</location>
        <location>Centromere</location>
        <location>Kinetochore</location>
    </subcellularLocation>
    <subcellularLocation>
        <location>Cytoplasm</location>
        <location>Cytoskeleton</location>
        <location>Spindle</location>
    </subcellularLocation>
    <subcellularLocation>
        <location>Cleavage furrow</location>
    </subcellularLocation>
    <subcellularLocation>
        <location evidence="13">Cytoplasmic vesicle membrane</location>
    </subcellularLocation>
    <text evidence="13">Localizes to the interphase and S phase centrosome. During mitosis, partially associated with the mitotic spindle. Concentrates at the plus ends of microtubules coincident with kinetochores in metaphase and anaphase in a CENPF-dependent manner. Also localizes to the cleavage furrow during cytokinesis. manner. Also localizes to the cleavage furrow during cytokinesis. Colocalizes with RAB9A to membrane vesicles (PubMed:34793709).</text>
</comment>
<comment type="alternative products">
    <event type="alternative splicing"/>
    <isoform>
        <id>Q9NXR1-2</id>
        <name>1</name>
        <sequence type="displayed"/>
    </isoform>
    <isoform>
        <id>Q9NXR1-1</id>
        <name>2</name>
        <sequence type="described" ref="VSP_059512"/>
    </isoform>
</comment>
<comment type="tissue specificity">
    <text evidence="11">Expressed in the neuroepithelium throughout the developing brain, including the cerebral cortex and cerebellum.</text>
</comment>
<comment type="PTM">
    <text evidence="2 7">Phosphorylated in mitosis (PubMed:16682949). Phosphorylated in vitro by CDC2 (PubMed:16682949). Phosphorylation at Thr-246 is essential for the G2/M transition (By similarity).</text>
</comment>
<comment type="disease" evidence="10 11">
    <disease id="DI-03160">
        <name>Lissencephaly 4 with microcephaly</name>
        <acronym>LIS4</acronym>
        <description>A neurodevelopmental disorder characterized by lissencephaly, severe brain atrophy, extreme microcephaly, and profound intellectual disability.</description>
        <dbReference type="MIM" id="614019"/>
    </disease>
    <text>The disease is caused by variants affecting the gene represented in this entry.</text>
</comment>
<comment type="disease" evidence="12">
    <disease id="DI-04102">
        <name>Microhydranencephaly</name>
        <acronym>MHAC</acronym>
        <description>A severe neurodevelopmental disorder characterized by microcephaly, severe motor and intellectual disability, spasticity, and brain malformations that include gross dilation of the ventricles with complete absence of the cerebral hemispheres or severe delay in their development.</description>
        <dbReference type="MIM" id="605013"/>
    </disease>
    <text>The disease is caused by variants affecting the gene represented in this entry.</text>
</comment>
<comment type="similarity">
    <text evidence="14">Belongs to the nudE family.</text>
</comment>